<dbReference type="EC" id="2.7.4.9"/>
<dbReference type="EMBL" id="EF432053">
    <property type="protein sequence ID" value="ABP73400.1"/>
    <property type="molecule type" value="Genomic_DNA"/>
</dbReference>
<dbReference type="RefSeq" id="YP_001210314.1">
    <property type="nucleotide sequence ID" value="NC_009452.1"/>
</dbReference>
<dbReference type="SMR" id="A4ZU96"/>
<dbReference type="GeneID" id="5129814"/>
<dbReference type="KEGG" id="vg:5129814"/>
<dbReference type="UniPathway" id="UPA00575"/>
<dbReference type="Proteomes" id="UP000000513">
    <property type="component" value="Segment"/>
</dbReference>
<dbReference type="GO" id="GO:0005524">
    <property type="term" value="F:ATP binding"/>
    <property type="evidence" value="ECO:0007669"/>
    <property type="project" value="UniProtKB-KW"/>
</dbReference>
<dbReference type="GO" id="GO:0004798">
    <property type="term" value="F:dTMP kinase activity"/>
    <property type="evidence" value="ECO:0007669"/>
    <property type="project" value="UniProtKB-EC"/>
</dbReference>
<dbReference type="GO" id="GO:0006235">
    <property type="term" value="P:dTTP biosynthetic process"/>
    <property type="evidence" value="ECO:0007669"/>
    <property type="project" value="UniProtKB-UniPathway"/>
</dbReference>
<dbReference type="Gene3D" id="3.40.50.300">
    <property type="entry name" value="P-loop containing nucleotide triphosphate hydrolases"/>
    <property type="match status" value="1"/>
</dbReference>
<dbReference type="InterPro" id="IPR027417">
    <property type="entry name" value="P-loop_NTPase"/>
</dbReference>
<dbReference type="InterPro" id="IPR007936">
    <property type="entry name" value="VapE-like_dom"/>
</dbReference>
<dbReference type="Pfam" id="PF05272">
    <property type="entry name" value="VapE-like_dom"/>
    <property type="match status" value="1"/>
</dbReference>
<dbReference type="SUPFAM" id="SSF52540">
    <property type="entry name" value="P-loop containing nucleoside triphosphate hydrolases"/>
    <property type="match status" value="1"/>
</dbReference>
<protein>
    <recommendedName>
        <fullName>Putative thymidylate kinase</fullName>
        <ecNumber>2.7.4.9</ecNumber>
    </recommendedName>
    <alternativeName>
        <fullName>dTMP kinase</fullName>
    </alternativeName>
</protein>
<feature type="chain" id="PRO_0000384819" description="Putative thymidylate kinase">
    <location>
        <begin position="1"/>
        <end position="156"/>
    </location>
</feature>
<feature type="binding site" evidence="1">
    <location>
        <begin position="7"/>
        <end position="14"/>
    </location>
    <ligand>
        <name>ATP</name>
        <dbReference type="ChEBI" id="CHEBI:30616"/>
    </ligand>
</feature>
<name>KTHY_ABVP</name>
<gene>
    <name type="ORF">ORF156</name>
</gene>
<reference key="1">
    <citation type="journal article" date="2007" name="Virology">
        <title>Genome of the Acidianus bottle-shaped virus and insights into the replication and packaging mechanisms.</title>
        <authorList>
            <person name="Peng X."/>
            <person name="Basta T."/>
            <person name="Haring M."/>
            <person name="Garrett R.A."/>
            <person name="Prangishvili D."/>
        </authorList>
    </citation>
    <scope>NUCLEOTIDE SEQUENCE [GENOMIC DNA]</scope>
</reference>
<evidence type="ECO:0000255" key="1"/>
<evidence type="ECO:0000305" key="2"/>
<accession>A4ZU96</accession>
<comment type="function">
    <text>Catalyzes the conversion of dTMP to dTDP.</text>
</comment>
<comment type="catalytic activity">
    <reaction>
        <text>dTMP + ATP = dTDP + ADP</text>
        <dbReference type="Rhea" id="RHEA:13517"/>
        <dbReference type="ChEBI" id="CHEBI:30616"/>
        <dbReference type="ChEBI" id="CHEBI:58369"/>
        <dbReference type="ChEBI" id="CHEBI:63528"/>
        <dbReference type="ChEBI" id="CHEBI:456216"/>
        <dbReference type="EC" id="2.7.4.9"/>
    </reaction>
</comment>
<comment type="pathway">
    <text>Pyrimidine metabolism; dTTP biosynthesis.</text>
</comment>
<comment type="similarity">
    <text evidence="2">Belongs to the thymidylate kinase family.</text>
</comment>
<proteinExistence type="inferred from homology"/>
<organismHost>
    <name type="scientific">Acidianus convivator</name>
    <dbReference type="NCBI Taxonomy" id="269667"/>
</organismHost>
<organism>
    <name type="scientific">Acidianus bottle-shaped virus (isolate Italy/Pozzuoli)</name>
    <name type="common">ABV</name>
    <dbReference type="NCBI Taxonomy" id="654911"/>
    <lineage>
        <taxon>Viruses</taxon>
        <taxon>Viruses incertae sedis</taxon>
        <taxon>Ampullaviridae</taxon>
        <taxon>Bottigliavirus</taxon>
        <taxon>Bottigliavirus ABV</taxon>
    </lineage>
</organism>
<keyword id="KW-0067">ATP-binding</keyword>
<keyword id="KW-0418">Kinase</keyword>
<keyword id="KW-0545">Nucleotide biosynthesis</keyword>
<keyword id="KW-0547">Nucleotide-binding</keyword>
<keyword id="KW-1185">Reference proteome</keyword>
<keyword id="KW-0808">Transferase</keyword>
<sequence length="156" mass="18306">MIYILEGLDGTGKTSFASELIKSQVFSRPMYVYFSKEDSYENTKLAWVSLIKELSKLNFNIIMDRSIISTIAYHFTYRPSKEYENFIRSELESVLNLDPSKAVFIHFVKVHDSKKLLEYANRVKSIRDNYHLLMRILREKGFNVIVNGGQKDFNLF</sequence>